<accession>A6GYG9</accession>
<name>TAL_FLAPJ</name>
<organism>
    <name type="scientific">Flavobacterium psychrophilum (strain ATCC 49511 / DSM 21280 / CIP 103535 / JIP02/86)</name>
    <dbReference type="NCBI Taxonomy" id="402612"/>
    <lineage>
        <taxon>Bacteria</taxon>
        <taxon>Pseudomonadati</taxon>
        <taxon>Bacteroidota</taxon>
        <taxon>Flavobacteriia</taxon>
        <taxon>Flavobacteriales</taxon>
        <taxon>Flavobacteriaceae</taxon>
        <taxon>Flavobacterium</taxon>
    </lineage>
</organism>
<sequence length="218" mass="23698">MKFFIDTANLAQIKEAQALGVLDGVTTNPSLMAKEGITGKNNILKHYVDICNIVEGDVSAEVNAMDYDGMIREGEELAELHDQIVVKLPMTKEGIMACKYFSDRGIRTNVTLIFSAGQALLAAKAGATYCSPFIGRLDDISTDGLNLIQEIRDIYDNYGFETQILAASVRHTMHVVNCAKIGADVMTGPLSSILGLLKHPLTDIGIAQFIADFEKGNR</sequence>
<protein>
    <recommendedName>
        <fullName evidence="1">Probable transaldolase</fullName>
        <ecNumber evidence="1">2.2.1.2</ecNumber>
    </recommendedName>
</protein>
<dbReference type="EC" id="2.2.1.2" evidence="1"/>
<dbReference type="EMBL" id="AM398681">
    <property type="protein sequence ID" value="CAL43142.1"/>
    <property type="molecule type" value="Genomic_DNA"/>
</dbReference>
<dbReference type="RefSeq" id="YP_001295953.1">
    <property type="nucleotide sequence ID" value="NC_009613.3"/>
</dbReference>
<dbReference type="SMR" id="A6GYG9"/>
<dbReference type="STRING" id="402612.FP1048"/>
<dbReference type="EnsemblBacteria" id="CAL43142">
    <property type="protein sequence ID" value="CAL43142"/>
    <property type="gene ID" value="FP1048"/>
</dbReference>
<dbReference type="KEGG" id="fps:FP1048"/>
<dbReference type="PATRIC" id="fig|402612.5.peg.1061"/>
<dbReference type="eggNOG" id="COG0176">
    <property type="taxonomic scope" value="Bacteria"/>
</dbReference>
<dbReference type="HOGENOM" id="CLU_079764_0_0_10"/>
<dbReference type="OrthoDB" id="9807051at2"/>
<dbReference type="UniPathway" id="UPA00115">
    <property type="reaction ID" value="UER00414"/>
</dbReference>
<dbReference type="Proteomes" id="UP000006394">
    <property type="component" value="Chromosome"/>
</dbReference>
<dbReference type="GO" id="GO:0005737">
    <property type="term" value="C:cytoplasm"/>
    <property type="evidence" value="ECO:0007669"/>
    <property type="project" value="UniProtKB-SubCell"/>
</dbReference>
<dbReference type="GO" id="GO:0016832">
    <property type="term" value="F:aldehyde-lyase activity"/>
    <property type="evidence" value="ECO:0007669"/>
    <property type="project" value="InterPro"/>
</dbReference>
<dbReference type="GO" id="GO:0004801">
    <property type="term" value="F:transaldolase activity"/>
    <property type="evidence" value="ECO:0007669"/>
    <property type="project" value="UniProtKB-UniRule"/>
</dbReference>
<dbReference type="GO" id="GO:0005975">
    <property type="term" value="P:carbohydrate metabolic process"/>
    <property type="evidence" value="ECO:0007669"/>
    <property type="project" value="InterPro"/>
</dbReference>
<dbReference type="GO" id="GO:0006098">
    <property type="term" value="P:pentose-phosphate shunt"/>
    <property type="evidence" value="ECO:0007669"/>
    <property type="project" value="UniProtKB-UniRule"/>
</dbReference>
<dbReference type="CDD" id="cd00956">
    <property type="entry name" value="Transaldolase_FSA"/>
    <property type="match status" value="1"/>
</dbReference>
<dbReference type="FunFam" id="3.20.20.70:FF:000018">
    <property type="entry name" value="Probable transaldolase"/>
    <property type="match status" value="1"/>
</dbReference>
<dbReference type="Gene3D" id="3.20.20.70">
    <property type="entry name" value="Aldolase class I"/>
    <property type="match status" value="1"/>
</dbReference>
<dbReference type="HAMAP" id="MF_00494">
    <property type="entry name" value="Transaldolase_3b"/>
    <property type="match status" value="1"/>
</dbReference>
<dbReference type="InterPro" id="IPR013785">
    <property type="entry name" value="Aldolase_TIM"/>
</dbReference>
<dbReference type="InterPro" id="IPR001585">
    <property type="entry name" value="TAL/FSA"/>
</dbReference>
<dbReference type="InterPro" id="IPR022999">
    <property type="entry name" value="Transaldolase_3B"/>
</dbReference>
<dbReference type="InterPro" id="IPR004731">
    <property type="entry name" value="Transaldolase_3B/F6P_aldolase"/>
</dbReference>
<dbReference type="InterPro" id="IPR018225">
    <property type="entry name" value="Transaldolase_AS"/>
</dbReference>
<dbReference type="InterPro" id="IPR033919">
    <property type="entry name" value="TSA/FSA_arc/bac"/>
</dbReference>
<dbReference type="NCBIfam" id="TIGR00875">
    <property type="entry name" value="fsa_talC_mipB"/>
    <property type="match status" value="1"/>
</dbReference>
<dbReference type="PANTHER" id="PTHR10683:SF40">
    <property type="entry name" value="FRUCTOSE-6-PHOSPHATE ALDOLASE 1-RELATED"/>
    <property type="match status" value="1"/>
</dbReference>
<dbReference type="PANTHER" id="PTHR10683">
    <property type="entry name" value="TRANSALDOLASE"/>
    <property type="match status" value="1"/>
</dbReference>
<dbReference type="Pfam" id="PF00923">
    <property type="entry name" value="TAL_FSA"/>
    <property type="match status" value="1"/>
</dbReference>
<dbReference type="SUPFAM" id="SSF51569">
    <property type="entry name" value="Aldolase"/>
    <property type="match status" value="1"/>
</dbReference>
<dbReference type="PROSITE" id="PS01054">
    <property type="entry name" value="TRANSALDOLASE_1"/>
    <property type="match status" value="1"/>
</dbReference>
<dbReference type="PROSITE" id="PS00958">
    <property type="entry name" value="TRANSALDOLASE_2"/>
    <property type="match status" value="1"/>
</dbReference>
<proteinExistence type="inferred from homology"/>
<keyword id="KW-0963">Cytoplasm</keyword>
<keyword id="KW-0570">Pentose shunt</keyword>
<keyword id="KW-1185">Reference proteome</keyword>
<keyword id="KW-0704">Schiff base</keyword>
<keyword id="KW-0808">Transferase</keyword>
<gene>
    <name evidence="1" type="primary">tal</name>
    <name type="ordered locus">FP1048</name>
</gene>
<feature type="chain" id="PRO_1000126315" description="Probable transaldolase">
    <location>
        <begin position="1"/>
        <end position="218"/>
    </location>
</feature>
<feature type="active site" description="Schiff-base intermediate with substrate" evidence="1">
    <location>
        <position position="87"/>
    </location>
</feature>
<reference key="1">
    <citation type="journal article" date="2007" name="Nat. Biotechnol.">
        <title>Complete genome sequence of the fish pathogen Flavobacterium psychrophilum.</title>
        <authorList>
            <person name="Duchaud E."/>
            <person name="Boussaha M."/>
            <person name="Loux V."/>
            <person name="Bernardet J.-F."/>
            <person name="Michel C."/>
            <person name="Kerouault B."/>
            <person name="Mondot S."/>
            <person name="Nicolas P."/>
            <person name="Bossy R."/>
            <person name="Caron C."/>
            <person name="Bessieres P."/>
            <person name="Gibrat J.-F."/>
            <person name="Claverol S."/>
            <person name="Dumetz F."/>
            <person name="Le Henaff M."/>
            <person name="Benmansour A."/>
        </authorList>
    </citation>
    <scope>NUCLEOTIDE SEQUENCE [LARGE SCALE GENOMIC DNA]</scope>
    <source>
        <strain>ATCC 49511 / DSM 21280 / CIP 103535 / JIP02/86</strain>
    </source>
</reference>
<comment type="function">
    <text evidence="1">Transaldolase is important for the balance of metabolites in the pentose-phosphate pathway.</text>
</comment>
<comment type="catalytic activity">
    <reaction evidence="1">
        <text>D-sedoheptulose 7-phosphate + D-glyceraldehyde 3-phosphate = D-erythrose 4-phosphate + beta-D-fructose 6-phosphate</text>
        <dbReference type="Rhea" id="RHEA:17053"/>
        <dbReference type="ChEBI" id="CHEBI:16897"/>
        <dbReference type="ChEBI" id="CHEBI:57483"/>
        <dbReference type="ChEBI" id="CHEBI:57634"/>
        <dbReference type="ChEBI" id="CHEBI:59776"/>
        <dbReference type="EC" id="2.2.1.2"/>
    </reaction>
</comment>
<comment type="pathway">
    <text evidence="1">Carbohydrate degradation; pentose phosphate pathway; D-glyceraldehyde 3-phosphate and beta-D-fructose 6-phosphate from D-ribose 5-phosphate and D-xylulose 5-phosphate (non-oxidative stage): step 2/3.</text>
</comment>
<comment type="subcellular location">
    <subcellularLocation>
        <location evidence="1">Cytoplasm</location>
    </subcellularLocation>
</comment>
<comment type="similarity">
    <text evidence="1">Belongs to the transaldolase family. Type 3B subfamily.</text>
</comment>
<evidence type="ECO:0000255" key="1">
    <source>
        <dbReference type="HAMAP-Rule" id="MF_00494"/>
    </source>
</evidence>